<feature type="chain" id="PRO_0000232500" description="Protein maelstrom homolog">
    <location>
        <begin position="1"/>
        <end position="420"/>
    </location>
</feature>
<feature type="DNA-binding region" description="HMG box">
    <location>
        <begin position="4"/>
        <end position="73"/>
    </location>
</feature>
<feature type="region of interest" description="Disordered" evidence="2">
    <location>
        <begin position="62"/>
        <end position="94"/>
    </location>
</feature>
<feature type="region of interest" description="Disordered" evidence="2">
    <location>
        <begin position="341"/>
        <end position="372"/>
    </location>
</feature>
<feature type="region of interest" description="Disordered" evidence="2">
    <location>
        <begin position="392"/>
        <end position="420"/>
    </location>
</feature>
<feature type="compositionally biased region" description="Polar residues" evidence="2">
    <location>
        <begin position="344"/>
        <end position="358"/>
    </location>
</feature>
<feature type="compositionally biased region" description="Polar residues" evidence="2">
    <location>
        <begin position="392"/>
        <end position="407"/>
    </location>
</feature>
<evidence type="ECO:0000250" key="1">
    <source>
        <dbReference type="UniProtKB" id="Q8BVN9"/>
    </source>
</evidence>
<evidence type="ECO:0000256" key="2">
    <source>
        <dbReference type="SAM" id="MobiDB-lite"/>
    </source>
</evidence>
<evidence type="ECO:0000305" key="3"/>
<dbReference type="EMBL" id="BC109912">
    <property type="protein sequence ID" value="AAI09913.1"/>
    <property type="molecule type" value="mRNA"/>
</dbReference>
<dbReference type="RefSeq" id="NP_001033282.1">
    <property type="nucleotide sequence ID" value="NM_001038193.2"/>
</dbReference>
<dbReference type="SMR" id="Q32KV2"/>
<dbReference type="FunCoup" id="Q32KV2">
    <property type="interactions" value="216"/>
</dbReference>
<dbReference type="STRING" id="9913.ENSBTAP00000034004"/>
<dbReference type="PaxDb" id="9913-ENSBTAP00000034004"/>
<dbReference type="GeneID" id="541073"/>
<dbReference type="KEGG" id="bta:541073"/>
<dbReference type="CTD" id="84944"/>
<dbReference type="eggNOG" id="ENOG502QTQB">
    <property type="taxonomic scope" value="Eukaryota"/>
</dbReference>
<dbReference type="InParanoid" id="Q32KV2"/>
<dbReference type="OrthoDB" id="24555at2759"/>
<dbReference type="Proteomes" id="UP000009136">
    <property type="component" value="Unplaced"/>
</dbReference>
<dbReference type="GO" id="GO:0005737">
    <property type="term" value="C:cytoplasm"/>
    <property type="evidence" value="ECO:0000250"/>
    <property type="project" value="UniProtKB"/>
</dbReference>
<dbReference type="GO" id="GO:0005634">
    <property type="term" value="C:nucleus"/>
    <property type="evidence" value="ECO:0000250"/>
    <property type="project" value="UniProtKB"/>
</dbReference>
<dbReference type="GO" id="GO:0043186">
    <property type="term" value="C:P granule"/>
    <property type="evidence" value="ECO:0000250"/>
    <property type="project" value="UniProtKB"/>
</dbReference>
<dbReference type="GO" id="GO:0071547">
    <property type="term" value="C:piP-body"/>
    <property type="evidence" value="ECO:0000250"/>
    <property type="project" value="UniProtKB"/>
</dbReference>
<dbReference type="GO" id="GO:0043565">
    <property type="term" value="F:sequence-specific DNA binding"/>
    <property type="evidence" value="ECO:0000318"/>
    <property type="project" value="GO_Central"/>
</dbReference>
<dbReference type="GO" id="GO:0030154">
    <property type="term" value="P:cell differentiation"/>
    <property type="evidence" value="ECO:0007669"/>
    <property type="project" value="UniProtKB-KW"/>
</dbReference>
<dbReference type="GO" id="GO:0007140">
    <property type="term" value="P:male meiotic nuclear division"/>
    <property type="evidence" value="ECO:0000318"/>
    <property type="project" value="GO_Central"/>
</dbReference>
<dbReference type="GO" id="GO:0045892">
    <property type="term" value="P:negative regulation of DNA-templated transcription"/>
    <property type="evidence" value="ECO:0000318"/>
    <property type="project" value="GO_Central"/>
</dbReference>
<dbReference type="GO" id="GO:0034587">
    <property type="term" value="P:piRNA processing"/>
    <property type="evidence" value="ECO:0000250"/>
    <property type="project" value="UniProtKB"/>
</dbReference>
<dbReference type="GO" id="GO:0060964">
    <property type="term" value="P:regulation of miRNA-mediated gene silencing"/>
    <property type="evidence" value="ECO:0007669"/>
    <property type="project" value="InterPro"/>
</dbReference>
<dbReference type="GO" id="GO:0031047">
    <property type="term" value="P:regulatory ncRNA-mediated gene silencing"/>
    <property type="evidence" value="ECO:0000250"/>
    <property type="project" value="UniProtKB"/>
</dbReference>
<dbReference type="GO" id="GO:0007283">
    <property type="term" value="P:spermatogenesis"/>
    <property type="evidence" value="ECO:0000250"/>
    <property type="project" value="UniProtKB"/>
</dbReference>
<dbReference type="CDD" id="cd21992">
    <property type="entry name" value="HMG-box_MAEL"/>
    <property type="match status" value="1"/>
</dbReference>
<dbReference type="FunFam" id="1.10.30.10:FF:000035">
    <property type="entry name" value="Maelstrom spermatogenic transposon silencer"/>
    <property type="match status" value="1"/>
</dbReference>
<dbReference type="Gene3D" id="1.10.30.10">
    <property type="entry name" value="High mobility group box domain"/>
    <property type="match status" value="1"/>
</dbReference>
<dbReference type="InterPro" id="IPR009071">
    <property type="entry name" value="HMG_box_dom"/>
</dbReference>
<dbReference type="InterPro" id="IPR036910">
    <property type="entry name" value="HMG_box_dom_sf"/>
</dbReference>
<dbReference type="InterPro" id="IPR024970">
    <property type="entry name" value="Maelstrom"/>
</dbReference>
<dbReference type="InterPro" id="IPR039259">
    <property type="entry name" value="Protein_maelstrom"/>
</dbReference>
<dbReference type="PANTHER" id="PTHR21358">
    <property type="entry name" value="PROTEIN MAELSTROM HOMOLOG"/>
    <property type="match status" value="1"/>
</dbReference>
<dbReference type="PANTHER" id="PTHR21358:SF4">
    <property type="entry name" value="PROTEIN MAELSTROM HOMOLOG"/>
    <property type="match status" value="1"/>
</dbReference>
<dbReference type="Pfam" id="PF09011">
    <property type="entry name" value="HMG_box_2"/>
    <property type="match status" value="1"/>
</dbReference>
<dbReference type="Pfam" id="PF13017">
    <property type="entry name" value="Maelstrom"/>
    <property type="match status" value="1"/>
</dbReference>
<dbReference type="SUPFAM" id="SSF47095">
    <property type="entry name" value="HMG-box"/>
    <property type="match status" value="1"/>
</dbReference>
<keyword id="KW-0963">Cytoplasm</keyword>
<keyword id="KW-0217">Developmental protein</keyword>
<keyword id="KW-0221">Differentiation</keyword>
<keyword id="KW-0238">DNA-binding</keyword>
<keyword id="KW-0469">Meiosis</keyword>
<keyword id="KW-0539">Nucleus</keyword>
<keyword id="KW-1185">Reference proteome</keyword>
<keyword id="KW-0943">RNA-mediated gene silencing</keyword>
<keyword id="KW-0744">Spermatogenesis</keyword>
<organism>
    <name type="scientific">Bos taurus</name>
    <name type="common">Bovine</name>
    <dbReference type="NCBI Taxonomy" id="9913"/>
    <lineage>
        <taxon>Eukaryota</taxon>
        <taxon>Metazoa</taxon>
        <taxon>Chordata</taxon>
        <taxon>Craniata</taxon>
        <taxon>Vertebrata</taxon>
        <taxon>Euteleostomi</taxon>
        <taxon>Mammalia</taxon>
        <taxon>Eutheria</taxon>
        <taxon>Laurasiatheria</taxon>
        <taxon>Artiodactyla</taxon>
        <taxon>Ruminantia</taxon>
        <taxon>Pecora</taxon>
        <taxon>Bovidae</taxon>
        <taxon>Bovinae</taxon>
        <taxon>Bos</taxon>
    </lineage>
</organism>
<protein>
    <recommendedName>
        <fullName>Protein maelstrom homolog</fullName>
    </recommendedName>
</protein>
<comment type="function">
    <text evidence="1">Plays a central role during spermatogenesis by repressing transposable elements and preventing their mobilization, which is essential for the germline integrity. Acts via the piRNA metabolic process, which mediates the repression of transposable elements during meiosis by forming complexes composed of piRNAs and Piwi proteins and governs the methylation and subsequent repression of transposons. Its association with piP-bodies suggests a participation in the secondary piRNAs metabolic process. Required for the localization of germ-cell factors to the meiotic nuage (By similarity).</text>
</comment>
<comment type="subunit">
    <text evidence="1">Interacts with SMARCB1, SIN3B and DDX4. Interacts with piRNA-associated proteins TDRD1, PIWIL1 and PIWIL2 (By similarity). Interacts with TEX19 (By similarity).</text>
</comment>
<comment type="subcellular location">
    <subcellularLocation>
        <location evidence="1">Cytoplasm</location>
    </subcellularLocation>
    <subcellularLocation>
        <location evidence="1">Nucleus</location>
    </subcellularLocation>
    <text evidence="1">Component of the meiotic nuage, also named P granule, a germ-cell-specific organelle required to repress transposon activity during meiosis. Specifically localizes to piP-bodies, a subset of the nuage which contains secondary piRNAs (By similarity).</text>
</comment>
<comment type="similarity">
    <text evidence="3">Belongs to the maelstrom family.</text>
</comment>
<sequence>MPNRRASRNAYYFFVQEKIPELRRRGLPVARVADAIPYCSADWALLKEEEKEKYAEMAREWRAAQGKDSGPSEKQKPVCTPLRKPGMLVPKQNVSPPDLSGLSLKSDQALLGGIFYFLNIFSHGELPPHCEQRFLPCEIGCVKYSLQEGIMADFHSFINPGDSSHKIPISHFESGHDQATVIENLYRFIHPNPGNWPPIYCKSDDRARVNWCLKHMAKSSEIRQDLELLTVEDLVVGIYQQKFLKEPSKTWVRSLLEVAMWDYSSNTRCKWHEENDILFCALAVCKKIANCISNSLATLFGIQLTEAHVPLQDYEASNSVTPKMVVLDAGRYQKLRVESPGFSHFSSSNQEQRSNTPTGDYPSGVKISGQNSSVRGRGITRLLESISSSSSNIHKFSNCETPVSPYTSPKHGYKSFSSLS</sequence>
<proteinExistence type="evidence at transcript level"/>
<name>MAEL_BOVIN</name>
<accession>Q32KV2</accession>
<gene>
    <name type="primary">MAEL</name>
</gene>
<reference key="1">
    <citation type="submission" date="2005-11" db="EMBL/GenBank/DDBJ databases">
        <authorList>
            <consortium name="NIH - Mammalian Gene Collection (MGC) project"/>
        </authorList>
    </citation>
    <scope>NUCLEOTIDE SEQUENCE [LARGE SCALE MRNA]</scope>
    <source>
        <strain>Crossbred X Angus</strain>
        <tissue>Liver</tissue>
    </source>
</reference>